<dbReference type="EMBL" id="AP006716">
    <property type="protein sequence ID" value="BAE03970.1"/>
    <property type="molecule type" value="Genomic_DNA"/>
</dbReference>
<dbReference type="RefSeq" id="WP_011274986.1">
    <property type="nucleotide sequence ID" value="NC_007168.1"/>
</dbReference>
<dbReference type="SMR" id="Q4L8Q5"/>
<dbReference type="KEGG" id="sha:SH0661"/>
<dbReference type="eggNOG" id="COG2223">
    <property type="taxonomic scope" value="Bacteria"/>
</dbReference>
<dbReference type="HOGENOM" id="CLU_001265_14_0_9"/>
<dbReference type="OrthoDB" id="9773404at2"/>
<dbReference type="Proteomes" id="UP000000543">
    <property type="component" value="Chromosome"/>
</dbReference>
<dbReference type="GO" id="GO:0005886">
    <property type="term" value="C:plasma membrane"/>
    <property type="evidence" value="ECO:0007669"/>
    <property type="project" value="UniProtKB-SubCell"/>
</dbReference>
<dbReference type="GO" id="GO:0015112">
    <property type="term" value="F:nitrate transmembrane transporter activity"/>
    <property type="evidence" value="ECO:0007669"/>
    <property type="project" value="InterPro"/>
</dbReference>
<dbReference type="GO" id="GO:0042128">
    <property type="term" value="P:nitrate assimilation"/>
    <property type="evidence" value="ECO:0007669"/>
    <property type="project" value="UniProtKB-KW"/>
</dbReference>
<dbReference type="CDD" id="cd17341">
    <property type="entry name" value="MFS_NRT2_like"/>
    <property type="match status" value="1"/>
</dbReference>
<dbReference type="Gene3D" id="1.20.1250.20">
    <property type="entry name" value="MFS general substrate transporter like domains"/>
    <property type="match status" value="2"/>
</dbReference>
<dbReference type="InterPro" id="IPR011701">
    <property type="entry name" value="MFS"/>
</dbReference>
<dbReference type="InterPro" id="IPR020846">
    <property type="entry name" value="MFS_dom"/>
</dbReference>
<dbReference type="InterPro" id="IPR036259">
    <property type="entry name" value="MFS_trans_sf"/>
</dbReference>
<dbReference type="InterPro" id="IPR044772">
    <property type="entry name" value="NO3_transporter"/>
</dbReference>
<dbReference type="PANTHER" id="PTHR23515">
    <property type="entry name" value="HIGH-AFFINITY NITRATE TRANSPORTER 2.3"/>
    <property type="match status" value="1"/>
</dbReference>
<dbReference type="Pfam" id="PF07690">
    <property type="entry name" value="MFS_1"/>
    <property type="match status" value="1"/>
</dbReference>
<dbReference type="SUPFAM" id="SSF103473">
    <property type="entry name" value="MFS general substrate transporter"/>
    <property type="match status" value="1"/>
</dbReference>
<dbReference type="PROSITE" id="PS50850">
    <property type="entry name" value="MFS"/>
    <property type="match status" value="1"/>
</dbReference>
<proteinExistence type="inferred from homology"/>
<sequence length="385" mass="41428">MYKTKGGFQLTLQTLSLVVGFMAWSIISPLMPYISQDVKVNPGQLSIILAIPVILGSILRVPFGYLTNIIGAKWVFFCSFVILLFPIFFLGQAQTPGMLMLSGFFLGVGGAIFSVGVTSVPKYFSKDKVGLANGIYGMGNIGTAVSSFLAPPIAGIIGWQTTVRSYLIIIAIFAILMFIFGDKNEPKVKVPLASQFKKLSSNYKLYYLSLWYFITFGAFVAFGLFLPNYLVNNFGIDKVDAGIRSGVFIALATFLRPIGGILGDKFNAVKVLMIDFIIMIVGAVILGISSHIALFTIGCLTISICAGLGNGLIFKLVPSYFAKESGAANGIVSMMGGLGGFFPPLVITYVTGLTGSSHLAFILLAIFGVLAFITMGHLYKKEYAK</sequence>
<organism>
    <name type="scientific">Staphylococcus haemolyticus (strain JCSC1435)</name>
    <dbReference type="NCBI Taxonomy" id="279808"/>
    <lineage>
        <taxon>Bacteria</taxon>
        <taxon>Bacillati</taxon>
        <taxon>Bacillota</taxon>
        <taxon>Bacilli</taxon>
        <taxon>Bacillales</taxon>
        <taxon>Staphylococcaceae</taxon>
        <taxon>Staphylococcus</taxon>
    </lineage>
</organism>
<accession>Q4L8Q5</accession>
<protein>
    <recommendedName>
        <fullName>Probable nitrate transporter NarT</fullName>
    </recommendedName>
</protein>
<feature type="chain" id="PRO_0000349403" description="Probable nitrate transporter NarT">
    <location>
        <begin position="1"/>
        <end position="385"/>
    </location>
</feature>
<feature type="transmembrane region" description="Helical" evidence="2">
    <location>
        <begin position="14"/>
        <end position="34"/>
    </location>
</feature>
<feature type="transmembrane region" description="Helical" evidence="2">
    <location>
        <begin position="47"/>
        <end position="67"/>
    </location>
</feature>
<feature type="transmembrane region" description="Helical" evidence="2">
    <location>
        <begin position="69"/>
        <end position="89"/>
    </location>
</feature>
<feature type="transmembrane region" description="Helical" evidence="2">
    <location>
        <begin position="97"/>
        <end position="117"/>
    </location>
</feature>
<feature type="transmembrane region" description="Helical" evidence="2">
    <location>
        <begin position="139"/>
        <end position="159"/>
    </location>
</feature>
<feature type="transmembrane region" description="Helical" evidence="2">
    <location>
        <begin position="161"/>
        <end position="181"/>
    </location>
</feature>
<feature type="transmembrane region" description="Helical" evidence="2">
    <location>
        <begin position="205"/>
        <end position="225"/>
    </location>
</feature>
<feature type="transmembrane region" description="Helical" evidence="2">
    <location>
        <begin position="246"/>
        <end position="266"/>
    </location>
</feature>
<feature type="transmembrane region" description="Helical" evidence="2">
    <location>
        <begin position="277"/>
        <end position="297"/>
    </location>
</feature>
<feature type="transmembrane region" description="Helical" evidence="2">
    <location>
        <begin position="302"/>
        <end position="322"/>
    </location>
</feature>
<feature type="transmembrane region" description="Helical" evidence="2">
    <location>
        <begin position="330"/>
        <end position="350"/>
    </location>
</feature>
<feature type="transmembrane region" description="Helical" evidence="2">
    <location>
        <begin position="359"/>
        <end position="379"/>
    </location>
</feature>
<comment type="function">
    <text evidence="1">Probably required for nitrate uptake under anoxic conditions. Also possibly involved in excretion of nitrite produced by the dissimilatory reduction of nitrate (By similarity).</text>
</comment>
<comment type="subcellular location">
    <subcellularLocation>
        <location evidence="3">Cell membrane</location>
        <topology evidence="3">Multi-pass membrane protein</topology>
    </subcellularLocation>
</comment>
<comment type="induction">
    <text evidence="1">Positively regulated by the two-component system NreB/NreC.</text>
</comment>
<comment type="similarity">
    <text evidence="3">Belongs to the major facilitator superfamily. Nitrate/nitrite porter (TC 2.A.1.8) family.</text>
</comment>
<name>NART_STAHJ</name>
<gene>
    <name type="primary">narT</name>
    <name type="synonym">narK</name>
    <name type="ordered locus">SH0661</name>
</gene>
<keyword id="KW-1003">Cell membrane</keyword>
<keyword id="KW-0472">Membrane</keyword>
<keyword id="KW-0534">Nitrate assimilation</keyword>
<keyword id="KW-0812">Transmembrane</keyword>
<keyword id="KW-1133">Transmembrane helix</keyword>
<keyword id="KW-0813">Transport</keyword>
<reference key="1">
    <citation type="journal article" date="2005" name="J. Bacteriol.">
        <title>Whole-genome sequencing of Staphylococcus haemolyticus uncovers the extreme plasticity of its genome and the evolution of human-colonizing staphylococcal species.</title>
        <authorList>
            <person name="Takeuchi F."/>
            <person name="Watanabe S."/>
            <person name="Baba T."/>
            <person name="Yuzawa H."/>
            <person name="Ito T."/>
            <person name="Morimoto Y."/>
            <person name="Kuroda M."/>
            <person name="Cui L."/>
            <person name="Takahashi M."/>
            <person name="Ankai A."/>
            <person name="Baba S."/>
            <person name="Fukui S."/>
            <person name="Lee J.C."/>
            <person name="Hiramatsu K."/>
        </authorList>
    </citation>
    <scope>NUCLEOTIDE SEQUENCE [LARGE SCALE GENOMIC DNA]</scope>
    <source>
        <strain>JCSC1435</strain>
    </source>
</reference>
<evidence type="ECO:0000250" key="1"/>
<evidence type="ECO:0000255" key="2"/>
<evidence type="ECO:0000305" key="3"/>